<accession>A4X5X7</accession>
<keyword id="KW-0963">Cytoplasm</keyword>
<keyword id="KW-0328">Glycosyltransferase</keyword>
<keyword id="KW-0660">Purine salvage</keyword>
<keyword id="KW-1185">Reference proteome</keyword>
<keyword id="KW-0808">Transferase</keyword>
<gene>
    <name evidence="1" type="primary">apt</name>
    <name type="ordered locus">Strop_1814</name>
</gene>
<organism>
    <name type="scientific">Salinispora tropica (strain ATCC BAA-916 / DSM 44818 / JCM 13857 / NBRC 105044 / CNB-440)</name>
    <dbReference type="NCBI Taxonomy" id="369723"/>
    <lineage>
        <taxon>Bacteria</taxon>
        <taxon>Bacillati</taxon>
        <taxon>Actinomycetota</taxon>
        <taxon>Actinomycetes</taxon>
        <taxon>Micromonosporales</taxon>
        <taxon>Micromonosporaceae</taxon>
        <taxon>Salinispora</taxon>
    </lineage>
</organism>
<feature type="chain" id="PRO_1000073803" description="Adenine phosphoribosyltransferase">
    <location>
        <begin position="1"/>
        <end position="188"/>
    </location>
</feature>
<dbReference type="EC" id="2.4.2.7" evidence="1"/>
<dbReference type="EMBL" id="CP000667">
    <property type="protein sequence ID" value="ABP54277.1"/>
    <property type="molecule type" value="Genomic_DNA"/>
</dbReference>
<dbReference type="RefSeq" id="WP_011905708.1">
    <property type="nucleotide sequence ID" value="NC_009380.1"/>
</dbReference>
<dbReference type="SMR" id="A4X5X7"/>
<dbReference type="STRING" id="369723.Strop_1814"/>
<dbReference type="KEGG" id="stp:Strop_1814"/>
<dbReference type="PATRIC" id="fig|369723.5.peg.1862"/>
<dbReference type="eggNOG" id="COG0503">
    <property type="taxonomic scope" value="Bacteria"/>
</dbReference>
<dbReference type="HOGENOM" id="CLU_063339_3_3_11"/>
<dbReference type="UniPathway" id="UPA00588">
    <property type="reaction ID" value="UER00646"/>
</dbReference>
<dbReference type="Proteomes" id="UP000000235">
    <property type="component" value="Chromosome"/>
</dbReference>
<dbReference type="GO" id="GO:0005737">
    <property type="term" value="C:cytoplasm"/>
    <property type="evidence" value="ECO:0007669"/>
    <property type="project" value="UniProtKB-SubCell"/>
</dbReference>
<dbReference type="GO" id="GO:0002055">
    <property type="term" value="F:adenine binding"/>
    <property type="evidence" value="ECO:0007669"/>
    <property type="project" value="TreeGrafter"/>
</dbReference>
<dbReference type="GO" id="GO:0003999">
    <property type="term" value="F:adenine phosphoribosyltransferase activity"/>
    <property type="evidence" value="ECO:0007669"/>
    <property type="project" value="UniProtKB-UniRule"/>
</dbReference>
<dbReference type="GO" id="GO:0016208">
    <property type="term" value="F:AMP binding"/>
    <property type="evidence" value="ECO:0007669"/>
    <property type="project" value="TreeGrafter"/>
</dbReference>
<dbReference type="GO" id="GO:0006168">
    <property type="term" value="P:adenine salvage"/>
    <property type="evidence" value="ECO:0007669"/>
    <property type="project" value="InterPro"/>
</dbReference>
<dbReference type="GO" id="GO:0044209">
    <property type="term" value="P:AMP salvage"/>
    <property type="evidence" value="ECO:0007669"/>
    <property type="project" value="UniProtKB-UniRule"/>
</dbReference>
<dbReference type="GO" id="GO:0006166">
    <property type="term" value="P:purine ribonucleoside salvage"/>
    <property type="evidence" value="ECO:0007669"/>
    <property type="project" value="UniProtKB-KW"/>
</dbReference>
<dbReference type="CDD" id="cd06223">
    <property type="entry name" value="PRTases_typeI"/>
    <property type="match status" value="1"/>
</dbReference>
<dbReference type="FunFam" id="3.40.50.2020:FF:000021">
    <property type="entry name" value="Adenine phosphoribosyltransferase"/>
    <property type="match status" value="1"/>
</dbReference>
<dbReference type="Gene3D" id="3.40.50.2020">
    <property type="match status" value="1"/>
</dbReference>
<dbReference type="HAMAP" id="MF_00004">
    <property type="entry name" value="Aden_phosphoribosyltr"/>
    <property type="match status" value="1"/>
</dbReference>
<dbReference type="InterPro" id="IPR005764">
    <property type="entry name" value="Ade_phspho_trans"/>
</dbReference>
<dbReference type="InterPro" id="IPR000836">
    <property type="entry name" value="PRibTrfase_dom"/>
</dbReference>
<dbReference type="InterPro" id="IPR029057">
    <property type="entry name" value="PRTase-like"/>
</dbReference>
<dbReference type="InterPro" id="IPR050054">
    <property type="entry name" value="UPRTase/APRTase"/>
</dbReference>
<dbReference type="NCBIfam" id="TIGR01090">
    <property type="entry name" value="apt"/>
    <property type="match status" value="1"/>
</dbReference>
<dbReference type="NCBIfam" id="NF002634">
    <property type="entry name" value="PRK02304.1-3"/>
    <property type="match status" value="1"/>
</dbReference>
<dbReference type="NCBIfam" id="NF002636">
    <property type="entry name" value="PRK02304.1-5"/>
    <property type="match status" value="1"/>
</dbReference>
<dbReference type="PANTHER" id="PTHR32315">
    <property type="entry name" value="ADENINE PHOSPHORIBOSYLTRANSFERASE"/>
    <property type="match status" value="1"/>
</dbReference>
<dbReference type="PANTHER" id="PTHR32315:SF3">
    <property type="entry name" value="ADENINE PHOSPHORIBOSYLTRANSFERASE"/>
    <property type="match status" value="1"/>
</dbReference>
<dbReference type="Pfam" id="PF00156">
    <property type="entry name" value="Pribosyltran"/>
    <property type="match status" value="1"/>
</dbReference>
<dbReference type="SUPFAM" id="SSF53271">
    <property type="entry name" value="PRTase-like"/>
    <property type="match status" value="1"/>
</dbReference>
<dbReference type="PROSITE" id="PS00103">
    <property type="entry name" value="PUR_PYR_PR_TRANSFER"/>
    <property type="match status" value="1"/>
</dbReference>
<protein>
    <recommendedName>
        <fullName evidence="1">Adenine phosphoribosyltransferase</fullName>
        <shortName evidence="1">APRT</shortName>
        <ecNumber evidence="1">2.4.2.7</ecNumber>
    </recommendedName>
</protein>
<reference key="1">
    <citation type="journal article" date="2007" name="Proc. Natl. Acad. Sci. U.S.A.">
        <title>Genome sequencing reveals complex secondary metabolome in the marine actinomycete Salinispora tropica.</title>
        <authorList>
            <person name="Udwary D.W."/>
            <person name="Zeigler L."/>
            <person name="Asolkar R.N."/>
            <person name="Singan V."/>
            <person name="Lapidus A."/>
            <person name="Fenical W."/>
            <person name="Jensen P.R."/>
            <person name="Moore B.S."/>
        </authorList>
    </citation>
    <scope>NUCLEOTIDE SEQUENCE [LARGE SCALE GENOMIC DNA]</scope>
    <source>
        <strain>ATCC BAA-916 / DSM 44818 / JCM 13857 / NBRC 105044 / CNB-440</strain>
    </source>
</reference>
<comment type="function">
    <text evidence="1">Catalyzes a salvage reaction resulting in the formation of AMP, that is energically less costly than de novo synthesis.</text>
</comment>
<comment type="catalytic activity">
    <reaction evidence="1">
        <text>AMP + diphosphate = 5-phospho-alpha-D-ribose 1-diphosphate + adenine</text>
        <dbReference type="Rhea" id="RHEA:16609"/>
        <dbReference type="ChEBI" id="CHEBI:16708"/>
        <dbReference type="ChEBI" id="CHEBI:33019"/>
        <dbReference type="ChEBI" id="CHEBI:58017"/>
        <dbReference type="ChEBI" id="CHEBI:456215"/>
        <dbReference type="EC" id="2.4.2.7"/>
    </reaction>
</comment>
<comment type="pathway">
    <text evidence="1">Purine metabolism; AMP biosynthesis via salvage pathway; AMP from adenine: step 1/1.</text>
</comment>
<comment type="subunit">
    <text evidence="1">Homodimer.</text>
</comment>
<comment type="subcellular location">
    <subcellularLocation>
        <location evidence="1">Cytoplasm</location>
    </subcellularLocation>
</comment>
<comment type="similarity">
    <text evidence="1">Belongs to the purine/pyrimidine phosphoribosyltransferase family.</text>
</comment>
<proteinExistence type="inferred from homology"/>
<name>APT_SALTO</name>
<sequence>MTETHTTGVRGDSGRETAELVASRVLDVPDFPKPGVMFKDLMPLFSDGDAFREVIDDIVRYHGRDSFDTVVGIEARGFVVAAAIAYAAGVGVVPVRKAGKLPRVAYSASYALEYGEATLEVHQDAFTAGHRVLVVDDVLATGGTAEATLDLVERAGGTVAGFTVLLELGFLGGRERLTPRPVHALLTV</sequence>
<evidence type="ECO:0000255" key="1">
    <source>
        <dbReference type="HAMAP-Rule" id="MF_00004"/>
    </source>
</evidence>